<evidence type="ECO:0000250" key="1">
    <source>
        <dbReference type="UniProtKB" id="P01514"/>
    </source>
</evidence>
<evidence type="ECO:0000250" key="2">
    <source>
        <dbReference type="UniProtKB" id="P84914"/>
    </source>
</evidence>
<evidence type="ECO:0000269" key="3">
    <source>
    </source>
</evidence>
<evidence type="ECO:0000303" key="4">
    <source>
    </source>
</evidence>
<evidence type="ECO:0000305" key="5"/>
<evidence type="ECO:0000305" key="6">
    <source>
    </source>
</evidence>
<keyword id="KW-0027">Amidation</keyword>
<keyword id="KW-0204">Cytolysis</keyword>
<keyword id="KW-0903">Direct protein sequencing</keyword>
<keyword id="KW-1213">G-protein coupled receptor impairing toxin</keyword>
<keyword id="KW-0467">Mast cell degranulation</keyword>
<keyword id="KW-0472">Membrane</keyword>
<keyword id="KW-0964">Secreted</keyword>
<keyword id="KW-1052">Target cell membrane</keyword>
<keyword id="KW-1053">Target membrane</keyword>
<keyword id="KW-0800">Toxin</keyword>
<name>MAST3_POLRT</name>
<proteinExistence type="evidence at protein level"/>
<sequence length="14" mass="1567">INWLKLGKKILGAI</sequence>
<dbReference type="GO" id="GO:0005576">
    <property type="term" value="C:extracellular region"/>
    <property type="evidence" value="ECO:0007669"/>
    <property type="project" value="UniProtKB-SubCell"/>
</dbReference>
<dbReference type="GO" id="GO:0016020">
    <property type="term" value="C:membrane"/>
    <property type="evidence" value="ECO:0007669"/>
    <property type="project" value="UniProtKB-KW"/>
</dbReference>
<dbReference type="GO" id="GO:0044218">
    <property type="term" value="C:other organism cell membrane"/>
    <property type="evidence" value="ECO:0007669"/>
    <property type="project" value="UniProtKB-KW"/>
</dbReference>
<dbReference type="GO" id="GO:0090729">
    <property type="term" value="F:toxin activity"/>
    <property type="evidence" value="ECO:0007669"/>
    <property type="project" value="UniProtKB-KW"/>
</dbReference>
<dbReference type="GO" id="GO:0031640">
    <property type="term" value="P:killing of cells of another organism"/>
    <property type="evidence" value="ECO:0007669"/>
    <property type="project" value="UniProtKB-KW"/>
</dbReference>
<reference key="1">
    <citation type="journal article" date="2006" name="Biol. Pharm. Bull.">
        <title>Novel biologically active peptides from the venom of Polistes rothneyi iwatai.</title>
        <authorList>
            <person name="Murata K."/>
            <person name="Shinada T."/>
            <person name="Ohfune Y."/>
            <person name="Hisada M."/>
            <person name="Yasuda A."/>
            <person name="Naoki H."/>
            <person name="Nakajima T."/>
        </authorList>
    </citation>
    <scope>PROTEIN SEQUENCE</scope>
    <scope>FUNCTION</scope>
    <scope>SUBCELLULAR LOCATION</scope>
    <scope>AMIDATION AT ILE-14</scope>
    <scope>MASS SPECTROMETRY</scope>
    <source>
        <strain>Subsp. iwatai</strain>
        <tissue>Venom</tissue>
    </source>
</reference>
<accession>P0DX37</accession>
<protein>
    <recommendedName>
        <fullName evidence="4">Polistes-mastoparan-R3</fullName>
        <shortName evidence="4">Pm-R3</shortName>
    </recommendedName>
</protein>
<feature type="peptide" id="PRO_0000458782" description="Polistes-mastoparan-R3" evidence="3">
    <location>
        <begin position="1"/>
        <end position="14"/>
    </location>
</feature>
<feature type="modified residue" description="Isoleucine amide" evidence="3">
    <location>
        <position position="14"/>
    </location>
</feature>
<organism>
    <name type="scientific">Polistes rothneyi</name>
    <name type="common">Rothney's paper wasp</name>
    <dbReference type="NCBI Taxonomy" id="30208"/>
    <lineage>
        <taxon>Eukaryota</taxon>
        <taxon>Metazoa</taxon>
        <taxon>Ecdysozoa</taxon>
        <taxon>Arthropoda</taxon>
        <taxon>Hexapoda</taxon>
        <taxon>Insecta</taxon>
        <taxon>Pterygota</taxon>
        <taxon>Neoptera</taxon>
        <taxon>Endopterygota</taxon>
        <taxon>Hymenoptera</taxon>
        <taxon>Apocrita</taxon>
        <taxon>Aculeata</taxon>
        <taxon>Vespoidea</taxon>
        <taxon>Vespidae</taxon>
        <taxon>Polistinae</taxon>
        <taxon>Polistini</taxon>
        <taxon>Polistes</taxon>
    </lineage>
</organism>
<comment type="function">
    <text evidence="1 2 3">Mast cell degranulating peptide with high potency of histamine release (EC(50)=0.16 uM on rat mast cells). Also shows high hemolytic activity (36% sheep erythrocytes lysis at 50 mM) (PubMed:17142988). Its mast cell degranulation activity may be related to the activation of G-protein coupled receptors in mast cells as well as interaction with other proteins located in cell endosomal membranes in the mast cells (By similarity).</text>
</comment>
<comment type="subcellular location">
    <subcellularLocation>
        <location evidence="3">Secreted</location>
    </subcellularLocation>
    <subcellularLocation>
        <location evidence="5">Target cell membrane</location>
    </subcellularLocation>
    <text evidence="6">Has an amphipathic alpha-helical conformation.</text>
</comment>
<comment type="mass spectrometry" mass="1566.1" method="MALDI" evidence="3"/>
<comment type="similarity">
    <text evidence="5">Belongs to the MCD family. Mastoparan subfamily.</text>
</comment>